<reference key="1">
    <citation type="journal article" date="2004" name="Genome Res.">
        <title>Genome sequence of Haloarcula marismortui: a halophilic archaeon from the Dead Sea.</title>
        <authorList>
            <person name="Baliga N.S."/>
            <person name="Bonneau R."/>
            <person name="Facciotti M.T."/>
            <person name="Pan M."/>
            <person name="Glusman G."/>
            <person name="Deutsch E.W."/>
            <person name="Shannon P."/>
            <person name="Chiu Y."/>
            <person name="Weng R.S."/>
            <person name="Gan R.R."/>
            <person name="Hung P."/>
            <person name="Date S.V."/>
            <person name="Marcotte E."/>
            <person name="Hood L."/>
            <person name="Ng W.V."/>
        </authorList>
    </citation>
    <scope>NUCLEOTIDE SEQUENCE [LARGE SCALE GENOMIC DNA]</scope>
    <source>
        <strain>ATCC 43049 / DSM 3752 / JCM 8966 / VKM B-1809</strain>
    </source>
</reference>
<reference key="2">
    <citation type="journal article" date="1980" name="Biochim. Biophys. Acta">
        <title>Amino acid sequence of 2Fe-2S ferredoxin from an extreme halophile, Halobacterium of the Dead Sea.</title>
        <authorList>
            <person name="Hase T."/>
            <person name="Wakabayashi S."/>
            <person name="Matsubara H."/>
            <person name="Mevarech M."/>
            <person name="Werber M.M."/>
        </authorList>
    </citation>
    <scope>PROTEIN SEQUENCE OF 2-129</scope>
</reference>
<reference key="3">
    <citation type="journal article" date="1996" name="Nat. Struct. Biol.">
        <title>Insights into protein adaptation to a saturated salt environment from the crystal structure of a halophilic 2Fe-2S ferredoxin.</title>
        <authorList>
            <person name="Frolow F."/>
            <person name="Harel M."/>
            <person name="Sussman J.L."/>
            <person name="Mevarech M."/>
            <person name="Shoham M."/>
        </authorList>
    </citation>
    <scope>X-RAY CRYSTALLOGRAPHY (1.9 ANGSTROMS)</scope>
</reference>
<evidence type="ECO:0000255" key="1">
    <source>
        <dbReference type="PROSITE-ProRule" id="PRU00465"/>
    </source>
</evidence>
<evidence type="ECO:0000269" key="2">
    <source>
    </source>
</evidence>
<evidence type="ECO:0000269" key="3">
    <source>
    </source>
</evidence>
<evidence type="ECO:0000305" key="4"/>
<evidence type="ECO:0007829" key="5">
    <source>
        <dbReference type="PDB" id="1DOI"/>
    </source>
</evidence>
<name>FER1_HALMA</name>
<protein>
    <recommendedName>
        <fullName>Ferredoxin-1</fullName>
    </recommendedName>
</protein>
<sequence>MPTVEYLNYEVVDDNGWDMYDDDVFGEASDMDLDDEDYGSLEVNEGEYILEAAEAQGYDWPFSCRAGACANCAAIVLEGDIDMDMQQILSDEEVEDKNVRLTCIGSPDADEVKIVYNAKHLDYLQNRVI</sequence>
<keyword id="KW-0001">2Fe-2S</keyword>
<keyword id="KW-0002">3D-structure</keyword>
<keyword id="KW-0903">Direct protein sequencing</keyword>
<keyword id="KW-0249">Electron transport</keyword>
<keyword id="KW-0408">Iron</keyword>
<keyword id="KW-0411">Iron-sulfur</keyword>
<keyword id="KW-0479">Metal-binding</keyword>
<keyword id="KW-1185">Reference proteome</keyword>
<keyword id="KW-0813">Transport</keyword>
<accession>P00217</accession>
<accession>Q5UZH4</accession>
<gene>
    <name type="primary">fer1</name>
    <name type="ordered locus">rrnAC2526</name>
</gene>
<dbReference type="EMBL" id="AY596297">
    <property type="protein sequence ID" value="AAV47329.1"/>
    <property type="status" value="ALT_INIT"/>
    <property type="molecule type" value="Genomic_DNA"/>
</dbReference>
<dbReference type="PIR" id="A00221">
    <property type="entry name" value="FEHSX"/>
</dbReference>
<dbReference type="RefSeq" id="WP_004959486.1">
    <property type="nucleotide sequence ID" value="NZ_CP039138.1"/>
</dbReference>
<dbReference type="PDB" id="1DOI">
    <property type="method" value="X-ray"/>
    <property type="resolution" value="1.90 A"/>
    <property type="chains" value="A=2-129"/>
</dbReference>
<dbReference type="PDBsum" id="1DOI"/>
<dbReference type="BMRB" id="P00217"/>
<dbReference type="SMR" id="P00217"/>
<dbReference type="STRING" id="272569.rrnAC2526"/>
<dbReference type="PaxDb" id="272569-rrnAC2526"/>
<dbReference type="EnsemblBacteria" id="AAV47329">
    <property type="protein sequence ID" value="AAV47329"/>
    <property type="gene ID" value="rrnAC2526"/>
</dbReference>
<dbReference type="GeneID" id="64824186"/>
<dbReference type="KEGG" id="hma:rrnAC2526"/>
<dbReference type="PATRIC" id="fig|272569.17.peg.3134"/>
<dbReference type="eggNOG" id="arCOG02844">
    <property type="taxonomic scope" value="Archaea"/>
</dbReference>
<dbReference type="HOGENOM" id="CLU_1773154_0_0_2"/>
<dbReference type="EvolutionaryTrace" id="P00217"/>
<dbReference type="Proteomes" id="UP000001169">
    <property type="component" value="Chromosome I"/>
</dbReference>
<dbReference type="GO" id="GO:0051537">
    <property type="term" value="F:2 iron, 2 sulfur cluster binding"/>
    <property type="evidence" value="ECO:0007669"/>
    <property type="project" value="UniProtKB-KW"/>
</dbReference>
<dbReference type="GO" id="GO:0046872">
    <property type="term" value="F:metal ion binding"/>
    <property type="evidence" value="ECO:0007669"/>
    <property type="project" value="UniProtKB-KW"/>
</dbReference>
<dbReference type="CDD" id="cd00207">
    <property type="entry name" value="fer2"/>
    <property type="match status" value="1"/>
</dbReference>
<dbReference type="Gene3D" id="3.10.20.30">
    <property type="match status" value="1"/>
</dbReference>
<dbReference type="InterPro" id="IPR036010">
    <property type="entry name" value="2Fe-2S_ferredoxin-like_sf"/>
</dbReference>
<dbReference type="InterPro" id="IPR001041">
    <property type="entry name" value="2Fe-2S_ferredoxin-type"/>
</dbReference>
<dbReference type="InterPro" id="IPR006058">
    <property type="entry name" value="2Fe2S_fd_BS"/>
</dbReference>
<dbReference type="InterPro" id="IPR053441">
    <property type="entry name" value="2Fe2S_Ferredoxin"/>
</dbReference>
<dbReference type="InterPro" id="IPR012675">
    <property type="entry name" value="Beta-grasp_dom_sf"/>
</dbReference>
<dbReference type="NCBIfam" id="NF041393">
    <property type="entry name" value="Frdxn_Halo"/>
    <property type="match status" value="1"/>
</dbReference>
<dbReference type="PANTHER" id="PTHR43112">
    <property type="entry name" value="FERREDOXIN"/>
    <property type="match status" value="1"/>
</dbReference>
<dbReference type="PANTHER" id="PTHR43112:SF3">
    <property type="entry name" value="FERREDOXIN-2, CHLOROPLASTIC"/>
    <property type="match status" value="1"/>
</dbReference>
<dbReference type="Pfam" id="PF00111">
    <property type="entry name" value="Fer2"/>
    <property type="match status" value="1"/>
</dbReference>
<dbReference type="SUPFAM" id="SSF54292">
    <property type="entry name" value="2Fe-2S ferredoxin-like"/>
    <property type="match status" value="1"/>
</dbReference>
<dbReference type="PROSITE" id="PS00197">
    <property type="entry name" value="2FE2S_FER_1"/>
    <property type="match status" value="1"/>
</dbReference>
<dbReference type="PROSITE" id="PS51085">
    <property type="entry name" value="2FE2S_FER_2"/>
    <property type="match status" value="1"/>
</dbReference>
<organism>
    <name type="scientific">Haloarcula marismortui (strain ATCC 43049 / DSM 3752 / JCM 8966 / VKM B-1809)</name>
    <name type="common">Halobacterium marismortui</name>
    <dbReference type="NCBI Taxonomy" id="272569"/>
    <lineage>
        <taxon>Archaea</taxon>
        <taxon>Methanobacteriati</taxon>
        <taxon>Methanobacteriota</taxon>
        <taxon>Stenosarchaea group</taxon>
        <taxon>Halobacteria</taxon>
        <taxon>Halobacteriales</taxon>
        <taxon>Haloarculaceae</taxon>
        <taxon>Haloarcula</taxon>
    </lineage>
</organism>
<feature type="initiator methionine" description="Removed" evidence="2">
    <location>
        <position position="1"/>
    </location>
</feature>
<feature type="chain" id="PRO_0000189385" description="Ferredoxin-1">
    <location>
        <begin position="2"/>
        <end position="129"/>
    </location>
</feature>
<feature type="domain" description="2Fe-2S ferredoxin-type" evidence="1">
    <location>
        <begin position="29"/>
        <end position="120"/>
    </location>
</feature>
<feature type="binding site" evidence="1 3">
    <location>
        <position position="64"/>
    </location>
    <ligand>
        <name>[2Fe-2S] cluster</name>
        <dbReference type="ChEBI" id="CHEBI:190135"/>
    </ligand>
</feature>
<feature type="binding site" evidence="1 3">
    <location>
        <position position="69"/>
    </location>
    <ligand>
        <name>[2Fe-2S] cluster</name>
        <dbReference type="ChEBI" id="CHEBI:190135"/>
    </ligand>
</feature>
<feature type="binding site" evidence="1 3">
    <location>
        <position position="72"/>
    </location>
    <ligand>
        <name>[2Fe-2S] cluster</name>
        <dbReference type="ChEBI" id="CHEBI:190135"/>
    </ligand>
</feature>
<feature type="binding site" evidence="1 3">
    <location>
        <position position="103"/>
    </location>
    <ligand>
        <name>[2Fe-2S] cluster</name>
        <dbReference type="ChEBI" id="CHEBI:190135"/>
    </ligand>
</feature>
<feature type="strand" evidence="5">
    <location>
        <begin position="3"/>
        <end position="8"/>
    </location>
</feature>
<feature type="helix" evidence="5">
    <location>
        <begin position="9"/>
        <end position="15"/>
    </location>
</feature>
<feature type="turn" evidence="5">
    <location>
        <begin position="19"/>
        <end position="21"/>
    </location>
</feature>
<feature type="helix" evidence="5">
    <location>
        <begin position="24"/>
        <end position="30"/>
    </location>
</feature>
<feature type="turn" evidence="5">
    <location>
        <begin position="35"/>
        <end position="37"/>
    </location>
</feature>
<feature type="strand" evidence="5">
    <location>
        <begin position="38"/>
        <end position="42"/>
    </location>
</feature>
<feature type="helix" evidence="5">
    <location>
        <begin position="49"/>
        <end position="55"/>
    </location>
</feature>
<feature type="strand" evidence="5">
    <location>
        <begin position="63"/>
        <end position="70"/>
    </location>
</feature>
<feature type="strand" evidence="5">
    <location>
        <begin position="73"/>
        <end position="79"/>
    </location>
</feature>
<feature type="strand" evidence="5">
    <location>
        <begin position="81"/>
        <end position="83"/>
    </location>
</feature>
<feature type="strand" evidence="5">
    <location>
        <begin position="87"/>
        <end position="89"/>
    </location>
</feature>
<feature type="helix" evidence="5">
    <location>
        <begin position="91"/>
        <end position="95"/>
    </location>
</feature>
<feature type="strand" evidence="5">
    <location>
        <begin position="99"/>
        <end position="101"/>
    </location>
</feature>
<feature type="helix" evidence="5">
    <location>
        <begin position="102"/>
        <end position="104"/>
    </location>
</feature>
<feature type="strand" evidence="5">
    <location>
        <begin position="105"/>
        <end position="107"/>
    </location>
</feature>
<feature type="strand" evidence="5">
    <location>
        <begin position="109"/>
        <end position="116"/>
    </location>
</feature>
<feature type="helix" evidence="5">
    <location>
        <begin position="118"/>
        <end position="120"/>
    </location>
</feature>
<feature type="helix" evidence="5">
    <location>
        <begin position="122"/>
        <end position="127"/>
    </location>
</feature>
<comment type="function">
    <text>Ferredoxins are iron-sulfur proteins that transfer electrons in a wide variety of metabolic reactions.</text>
</comment>
<comment type="cofactor">
    <cofactor>
        <name>[2Fe-2S] cluster</name>
        <dbReference type="ChEBI" id="CHEBI:190135"/>
    </cofactor>
    <text>Binds 1 [2Fe-2S] cluster.</text>
</comment>
<comment type="similarity">
    <text evidence="4">Belongs to the 2Fe2S plant-type ferredoxin family.</text>
</comment>
<comment type="sequence caution" evidence="4">
    <conflict type="erroneous initiation">
        <sequence resource="EMBL-CDS" id="AAV47329"/>
    </conflict>
</comment>
<proteinExistence type="evidence at protein level"/>